<name>ENO1_YEAST</name>
<accession>P00924</accession>
<accession>D6VV34</accession>
<accession>P99013</accession>
<evidence type="ECO:0000250" key="1">
    <source>
        <dbReference type="UniProtKB" id="P00925"/>
    </source>
</evidence>
<evidence type="ECO:0000269" key="2">
    <source>
    </source>
</evidence>
<evidence type="ECO:0000269" key="3">
    <source>
    </source>
</evidence>
<evidence type="ECO:0000269" key="4">
    <source>
    </source>
</evidence>
<evidence type="ECO:0000269" key="5">
    <source>
    </source>
</evidence>
<evidence type="ECO:0000269" key="6">
    <source>
    </source>
</evidence>
<evidence type="ECO:0000269" key="7">
    <source>
    </source>
</evidence>
<evidence type="ECO:0000269" key="8">
    <source>
    </source>
</evidence>
<evidence type="ECO:0000269" key="9">
    <source>
    </source>
</evidence>
<evidence type="ECO:0000269" key="10">
    <source>
    </source>
</evidence>
<evidence type="ECO:0000269" key="11">
    <source>
    </source>
</evidence>
<evidence type="ECO:0000269" key="12">
    <source ref="6"/>
</evidence>
<evidence type="ECO:0000305" key="13"/>
<evidence type="ECO:0007744" key="14">
    <source>
    </source>
</evidence>
<evidence type="ECO:0007744" key="15">
    <source>
    </source>
</evidence>
<evidence type="ECO:0007829" key="16">
    <source>
        <dbReference type="PDB" id="1EBH"/>
    </source>
</evidence>
<evidence type="ECO:0007829" key="17">
    <source>
        <dbReference type="PDB" id="1P48"/>
    </source>
</evidence>
<evidence type="ECO:0007829" key="18">
    <source>
        <dbReference type="PDB" id="2AL1"/>
    </source>
</evidence>
<evidence type="ECO:0007829" key="19">
    <source>
        <dbReference type="PDB" id="2AL2"/>
    </source>
</evidence>
<protein>
    <recommendedName>
        <fullName>Enolase 1</fullName>
        <ecNumber>4.2.1.11</ecNumber>
    </recommendedName>
    <alternativeName>
        <fullName>2-phospho-D-glycerate hydro-lyase 1</fullName>
    </alternativeName>
    <alternativeName>
        <fullName>2-phosphoglycerate dehydratase 1</fullName>
    </alternativeName>
</protein>
<feature type="initiator methionine" description="Removed" evidence="8 12">
    <location>
        <position position="1"/>
    </location>
</feature>
<feature type="chain" id="PRO_0000134062" description="Enolase 1">
    <location>
        <begin position="2"/>
        <end position="437"/>
    </location>
</feature>
<feature type="active site" description="Proton donor" evidence="5">
    <location>
        <position position="212"/>
    </location>
</feature>
<feature type="active site" description="Proton acceptor" evidence="5 10">
    <location>
        <position position="346"/>
    </location>
</feature>
<feature type="binding site" evidence="9 11">
    <location>
        <position position="160"/>
    </location>
    <ligand>
        <name>substrate</name>
    </ligand>
</feature>
<feature type="binding site" evidence="9 11">
    <location>
        <position position="169"/>
    </location>
    <ligand>
        <name>substrate</name>
    </ligand>
</feature>
<feature type="binding site" evidence="9">
    <location>
        <position position="247"/>
    </location>
    <ligand>
        <name>Mg(2+)</name>
        <dbReference type="ChEBI" id="CHEBI:18420"/>
    </ligand>
</feature>
<feature type="binding site" evidence="9">
    <location>
        <position position="296"/>
    </location>
    <ligand>
        <name>Mg(2+)</name>
        <dbReference type="ChEBI" id="CHEBI:18420"/>
    </ligand>
</feature>
<feature type="binding site" evidence="9 11">
    <location>
        <position position="296"/>
    </location>
    <ligand>
        <name>substrate</name>
    </ligand>
</feature>
<feature type="binding site" evidence="9">
    <location>
        <position position="321"/>
    </location>
    <ligand>
        <name>Mg(2+)</name>
        <dbReference type="ChEBI" id="CHEBI:18420"/>
    </ligand>
</feature>
<feature type="binding site" evidence="9 11">
    <location>
        <position position="321"/>
    </location>
    <ligand>
        <name>substrate</name>
    </ligand>
</feature>
<feature type="binding site" evidence="4 9 11">
    <location>
        <begin position="373"/>
        <end position="376"/>
    </location>
    <ligand>
        <name>substrate</name>
    </ligand>
</feature>
<feature type="binding site" evidence="9 11">
    <location>
        <position position="397"/>
    </location>
    <ligand>
        <name>substrate</name>
    </ligand>
</feature>
<feature type="modified residue" description="Phosphoserine" evidence="14">
    <location>
        <position position="119"/>
    </location>
</feature>
<feature type="modified residue" description="Phosphoserine" evidence="1">
    <location>
        <position position="138"/>
    </location>
</feature>
<feature type="modified residue" description="Phosphoserine" evidence="1">
    <location>
        <position position="188"/>
    </location>
</feature>
<feature type="modified residue" description="Phosphothreonine" evidence="1">
    <location>
        <position position="313"/>
    </location>
</feature>
<feature type="modified residue" description="Phosphothreonine" evidence="1">
    <location>
        <position position="324"/>
    </location>
</feature>
<feature type="cross-link" description="Glycyl lysine isopeptide (Lys-Gly) (interchain with G-Cter in ubiquitin)" evidence="1">
    <location>
        <position position="60"/>
    </location>
</feature>
<feature type="cross-link" description="Glycyl lysine isopeptide (Lys-Gly) (interchain with G-Cter in ubiquitin)" evidence="1">
    <location>
        <position position="243"/>
    </location>
</feature>
<feature type="cross-link" description="Glycyl lysine isopeptide (Lys-Gly) (interchain with G-Cter in ubiquitin)" evidence="15">
    <location>
        <position position="358"/>
    </location>
</feature>
<feature type="mutagenesis site" description="Reduces activity by 99.9%.">
    <original>S</original>
    <variation>A</variation>
    <location>
        <position position="40"/>
    </location>
</feature>
<feature type="mutagenesis site" description="Reduces activity by 99%." evidence="2 6">
    <original>H</original>
    <variation>A</variation>
    <variation>F</variation>
    <variation>N</variation>
    <location>
        <position position="160"/>
    </location>
</feature>
<feature type="mutagenesis site" description="Reduces kcat over 100000-fold.">
    <original>E</original>
    <variation>Q</variation>
    <location>
        <position position="169"/>
    </location>
</feature>
<feature type="mutagenesis site" description="Reduces activity by 44%." evidence="6">
    <original>N</original>
    <variation>A</variation>
    <location>
        <position position="208"/>
    </location>
</feature>
<feature type="mutagenesis site" description="Reduces kcat over 100000-fold." evidence="5">
    <original>E</original>
    <variation>Q</variation>
    <location>
        <position position="212"/>
    </location>
</feature>
<feature type="mutagenesis site" description="Reduces kcat over 100000-fold. Abolishes of the proton exchange reaction that initiates the enzymatic reaction." evidence="5 10">
    <original>K</original>
    <variation>A</variation>
    <location>
        <position position="346"/>
    </location>
</feature>
<feature type="sequence conflict" description="In Ref. 1; AAA88712." evidence="13" ref="1">
    <original>I</original>
    <variation>V</variation>
    <location>
        <position position="242"/>
    </location>
</feature>
<feature type="strand" evidence="18">
    <location>
        <begin position="5"/>
        <end position="12"/>
    </location>
</feature>
<feature type="strand" evidence="18">
    <location>
        <begin position="18"/>
        <end position="26"/>
    </location>
</feature>
<feature type="strand" evidence="18">
    <location>
        <begin position="29"/>
        <end position="34"/>
    </location>
</feature>
<feature type="strand" evidence="16">
    <location>
        <begin position="43"/>
        <end position="45"/>
    </location>
</feature>
<feature type="helix" evidence="18">
    <location>
        <begin position="57"/>
        <end position="59"/>
    </location>
</feature>
<feature type="helix" evidence="18">
    <location>
        <begin position="63"/>
        <end position="71"/>
    </location>
</feature>
<feature type="helix" evidence="18">
    <location>
        <begin position="73"/>
        <end position="80"/>
    </location>
</feature>
<feature type="helix" evidence="18">
    <location>
        <begin position="87"/>
        <end position="98"/>
    </location>
</feature>
<feature type="strand" evidence="16">
    <location>
        <begin position="100"/>
        <end position="102"/>
    </location>
</feature>
<feature type="turn" evidence="18">
    <location>
        <begin position="104"/>
        <end position="106"/>
    </location>
</feature>
<feature type="helix" evidence="18">
    <location>
        <begin position="108"/>
        <end position="125"/>
    </location>
</feature>
<feature type="helix" evidence="18">
    <location>
        <begin position="130"/>
        <end position="138"/>
    </location>
</feature>
<feature type="strand" evidence="18">
    <location>
        <begin position="145"/>
        <end position="147"/>
    </location>
</feature>
<feature type="strand" evidence="18">
    <location>
        <begin position="152"/>
        <end position="156"/>
    </location>
</feature>
<feature type="helix" evidence="18">
    <location>
        <begin position="158"/>
        <end position="160"/>
    </location>
</feature>
<feature type="strand" evidence="18">
    <location>
        <begin position="161"/>
        <end position="164"/>
    </location>
</feature>
<feature type="strand" evidence="18">
    <location>
        <begin position="169"/>
        <end position="173"/>
    </location>
</feature>
<feature type="helix" evidence="18">
    <location>
        <begin position="180"/>
        <end position="202"/>
    </location>
</feature>
<feature type="helix" evidence="18">
    <location>
        <begin position="204"/>
        <end position="207"/>
    </location>
</feature>
<feature type="strand" evidence="17">
    <location>
        <begin position="213"/>
        <end position="215"/>
    </location>
</feature>
<feature type="helix" evidence="18">
    <location>
        <begin position="222"/>
        <end position="236"/>
    </location>
</feature>
<feature type="turn" evidence="18">
    <location>
        <begin position="239"/>
        <end position="241"/>
    </location>
</feature>
<feature type="strand" evidence="18">
    <location>
        <begin position="243"/>
        <end position="247"/>
    </location>
</feature>
<feature type="helix" evidence="18">
    <location>
        <begin position="250"/>
        <end position="253"/>
    </location>
</feature>
<feature type="turn" evidence="18">
    <location>
        <begin position="261"/>
        <end position="264"/>
    </location>
</feature>
<feature type="helix" evidence="18">
    <location>
        <begin position="270"/>
        <end position="272"/>
    </location>
</feature>
<feature type="helix" evidence="18">
    <location>
        <begin position="276"/>
        <end position="289"/>
    </location>
</feature>
<feature type="strand" evidence="18">
    <location>
        <begin position="292"/>
        <end position="296"/>
    </location>
</feature>
<feature type="helix" evidence="18">
    <location>
        <begin position="304"/>
        <end position="311"/>
    </location>
</feature>
<feature type="turn" evidence="19">
    <location>
        <begin position="312"/>
        <end position="314"/>
    </location>
</feature>
<feature type="strand" evidence="18">
    <location>
        <begin position="316"/>
        <end position="321"/>
    </location>
</feature>
<feature type="turn" evidence="18">
    <location>
        <begin position="322"/>
        <end position="326"/>
    </location>
</feature>
<feature type="helix" evidence="18">
    <location>
        <begin position="328"/>
        <end position="336"/>
    </location>
</feature>
<feature type="strand" evidence="18">
    <location>
        <begin position="341"/>
        <end position="345"/>
    </location>
</feature>
<feature type="helix" evidence="18">
    <location>
        <begin position="347"/>
        <end position="350"/>
    </location>
</feature>
<feature type="helix" evidence="18">
    <location>
        <begin position="353"/>
        <end position="365"/>
    </location>
</feature>
<feature type="strand" evidence="18">
    <location>
        <begin position="369"/>
        <end position="373"/>
    </location>
</feature>
<feature type="helix" evidence="18">
    <location>
        <begin position="383"/>
        <end position="390"/>
    </location>
</feature>
<feature type="strand" evidence="18">
    <location>
        <begin position="394"/>
        <end position="397"/>
    </location>
</feature>
<feature type="helix" evidence="18">
    <location>
        <begin position="404"/>
        <end position="420"/>
    </location>
</feature>
<feature type="helix" evidence="18">
    <location>
        <begin position="421"/>
        <end position="423"/>
    </location>
</feature>
<feature type="strand" evidence="18">
    <location>
        <begin position="424"/>
        <end position="426"/>
    </location>
</feature>
<feature type="helix" evidence="18">
    <location>
        <begin position="428"/>
        <end position="430"/>
    </location>
</feature>
<feature type="helix" evidence="18">
    <location>
        <begin position="434"/>
        <end position="436"/>
    </location>
</feature>
<sequence>MAVSKVYARSVYDSRGNPTVEVELTTEKGVFRSIVPSGASTGVHEALEMRDGDKSKWMGKGVLHAVKNVNDVIAPAFVKANIDVKDQKAVDDFLISLDGTANKSKLGANAILGVSLAASRAAAAEKNVPLYKHLADLSKSKTSPYVLPVPFLNVLNGGSHAGGALALQEFMIAPTGAKTFAEALRIGSEVYHNLKSLTKKRYGASAGNVGDEGGVAPNIQTAEEALDLIVDAIKAAGHDGKIKIGLDCASSEFFKDGKYDLDFKNPNSDKSKWLTGPQLADLYHSLMKRYPIVSIEDPFAEDDWEAWSHFFKTAGIQIVADDLTVTNPKRIATAIEKKAADALLLKVNQIGTLSESIKAAQDSFAAGWGVMVSHRSGETEDTFIADLVVGLRTGQIKTGAPARSERLAKLNQLLRIEEELGDNAVFAGENFHHGDKL</sequence>
<gene>
    <name type="primary">ENO1</name>
    <name type="synonym">ENOA</name>
    <name type="synonym">HSP48</name>
    <name type="ordered locus">YGR254W</name>
    <name type="ORF">G9160</name>
</gene>
<dbReference type="EC" id="4.2.1.11"/>
<dbReference type="EMBL" id="J01322">
    <property type="protein sequence ID" value="AAA88712.1"/>
    <property type="molecule type" value="Genomic_DNA"/>
</dbReference>
<dbReference type="EMBL" id="X99228">
    <property type="protein sequence ID" value="CAA67616.1"/>
    <property type="molecule type" value="Genomic_DNA"/>
</dbReference>
<dbReference type="EMBL" id="Z73039">
    <property type="protein sequence ID" value="CAA97283.1"/>
    <property type="molecule type" value="Genomic_DNA"/>
</dbReference>
<dbReference type="EMBL" id="BK006941">
    <property type="protein sequence ID" value="DAA08345.1"/>
    <property type="molecule type" value="Genomic_DNA"/>
</dbReference>
<dbReference type="PIR" id="S64586">
    <property type="entry name" value="NOBY"/>
</dbReference>
<dbReference type="RefSeq" id="NP_011770.3">
    <property type="nucleotide sequence ID" value="NM_001181383.3"/>
</dbReference>
<dbReference type="PDB" id="1EBG">
    <property type="method" value="X-ray"/>
    <property type="resolution" value="2.10 A"/>
    <property type="chains" value="A/B=2-437"/>
</dbReference>
<dbReference type="PDB" id="1EBH">
    <property type="method" value="X-ray"/>
    <property type="resolution" value="1.90 A"/>
    <property type="chains" value="A/B=2-437"/>
</dbReference>
<dbReference type="PDB" id="1ELS">
    <property type="method" value="X-ray"/>
    <property type="resolution" value="2.40 A"/>
    <property type="chains" value="A=2-437"/>
</dbReference>
<dbReference type="PDB" id="1L8P">
    <property type="method" value="X-ray"/>
    <property type="resolution" value="2.10 A"/>
    <property type="chains" value="A/B/C/D=2-437"/>
</dbReference>
<dbReference type="PDB" id="1NEL">
    <property type="method" value="X-ray"/>
    <property type="resolution" value="2.60 A"/>
    <property type="chains" value="A=2-437"/>
</dbReference>
<dbReference type="PDB" id="1ONE">
    <property type="method" value="X-ray"/>
    <property type="resolution" value="1.80 A"/>
    <property type="chains" value="A/B=2-437"/>
</dbReference>
<dbReference type="PDB" id="1P43">
    <property type="method" value="X-ray"/>
    <property type="resolution" value="1.80 A"/>
    <property type="chains" value="A/B=2-437"/>
</dbReference>
<dbReference type="PDB" id="1P48">
    <property type="method" value="X-ray"/>
    <property type="resolution" value="2.00 A"/>
    <property type="chains" value="A/B=2-437"/>
</dbReference>
<dbReference type="PDB" id="2AL1">
    <property type="method" value="X-ray"/>
    <property type="resolution" value="1.50 A"/>
    <property type="chains" value="A/B=2-437"/>
</dbReference>
<dbReference type="PDB" id="2AL2">
    <property type="method" value="X-ray"/>
    <property type="resolution" value="1.85 A"/>
    <property type="chains" value="A/B=2-437"/>
</dbReference>
<dbReference type="PDB" id="2ONE">
    <property type="method" value="X-ray"/>
    <property type="resolution" value="2.00 A"/>
    <property type="chains" value="A/B=2-437"/>
</dbReference>
<dbReference type="PDB" id="2XGZ">
    <property type="method" value="X-ray"/>
    <property type="resolution" value="1.80 A"/>
    <property type="chains" value="A/B=2-437"/>
</dbReference>
<dbReference type="PDB" id="2XH0">
    <property type="method" value="X-ray"/>
    <property type="resolution" value="1.70 A"/>
    <property type="chains" value="A/B/C/D=2-437"/>
</dbReference>
<dbReference type="PDB" id="2XH2">
    <property type="method" value="X-ray"/>
    <property type="resolution" value="1.80 A"/>
    <property type="chains" value="A/B/C/D=2-437"/>
</dbReference>
<dbReference type="PDB" id="2XH4">
    <property type="method" value="X-ray"/>
    <property type="resolution" value="1.70 A"/>
    <property type="chains" value="A/B/C/D=2-437"/>
</dbReference>
<dbReference type="PDB" id="2XH7">
    <property type="method" value="X-ray"/>
    <property type="resolution" value="1.80 A"/>
    <property type="chains" value="A/B=2-437"/>
</dbReference>
<dbReference type="PDB" id="3ENL">
    <property type="method" value="X-ray"/>
    <property type="resolution" value="2.25 A"/>
    <property type="chains" value="A=2-437"/>
</dbReference>
<dbReference type="PDB" id="4ENL">
    <property type="method" value="X-ray"/>
    <property type="resolution" value="1.90 A"/>
    <property type="chains" value="A=2-437"/>
</dbReference>
<dbReference type="PDB" id="5ENL">
    <property type="method" value="X-ray"/>
    <property type="resolution" value="2.20 A"/>
    <property type="chains" value="A=2-437"/>
</dbReference>
<dbReference type="PDB" id="6ENL">
    <property type="method" value="X-ray"/>
    <property type="resolution" value="2.20 A"/>
    <property type="chains" value="A=2-437"/>
</dbReference>
<dbReference type="PDB" id="7ENL">
    <property type="method" value="X-ray"/>
    <property type="resolution" value="2.20 A"/>
    <property type="chains" value="A=2-437"/>
</dbReference>
<dbReference type="PDBsum" id="1EBG"/>
<dbReference type="PDBsum" id="1EBH"/>
<dbReference type="PDBsum" id="1ELS"/>
<dbReference type="PDBsum" id="1L8P"/>
<dbReference type="PDBsum" id="1NEL"/>
<dbReference type="PDBsum" id="1ONE"/>
<dbReference type="PDBsum" id="1P43"/>
<dbReference type="PDBsum" id="1P48"/>
<dbReference type="PDBsum" id="2AL1"/>
<dbReference type="PDBsum" id="2AL2"/>
<dbReference type="PDBsum" id="2ONE"/>
<dbReference type="PDBsum" id="2XGZ"/>
<dbReference type="PDBsum" id="2XH0"/>
<dbReference type="PDBsum" id="2XH2"/>
<dbReference type="PDBsum" id="2XH4"/>
<dbReference type="PDBsum" id="2XH7"/>
<dbReference type="PDBsum" id="3ENL"/>
<dbReference type="PDBsum" id="4ENL"/>
<dbReference type="PDBsum" id="5ENL"/>
<dbReference type="PDBsum" id="6ENL"/>
<dbReference type="PDBsum" id="7ENL"/>
<dbReference type="SMR" id="P00924"/>
<dbReference type="BioGRID" id="33505">
    <property type="interactions" value="216"/>
</dbReference>
<dbReference type="DIP" id="DIP-5561N"/>
<dbReference type="FunCoup" id="P00924">
    <property type="interactions" value="1356"/>
</dbReference>
<dbReference type="IntAct" id="P00924">
    <property type="interactions" value="117"/>
</dbReference>
<dbReference type="MINT" id="P00924"/>
<dbReference type="STRING" id="4932.YGR254W"/>
<dbReference type="Allergome" id="786">
    <property type="allergen name" value="Sac c Enolase"/>
</dbReference>
<dbReference type="MoonDB" id="P00924">
    <property type="type" value="Curated"/>
</dbReference>
<dbReference type="MoonProt" id="P00924"/>
<dbReference type="CarbonylDB" id="P00924"/>
<dbReference type="iPTMnet" id="P00924"/>
<dbReference type="MetOSite" id="P00924"/>
<dbReference type="PaxDb" id="4932-YGR254W"/>
<dbReference type="PeptideAtlas" id="P00924"/>
<dbReference type="TopDownProteomics" id="P00924"/>
<dbReference type="EnsemblFungi" id="YGR254W_mRNA">
    <property type="protein sequence ID" value="YGR254W"/>
    <property type="gene ID" value="YGR254W"/>
</dbReference>
<dbReference type="GeneID" id="853169"/>
<dbReference type="KEGG" id="sce:YGR254W"/>
<dbReference type="AGR" id="SGD:S000003486"/>
<dbReference type="SGD" id="S000003486">
    <property type="gene designation" value="ENO1"/>
</dbReference>
<dbReference type="VEuPathDB" id="FungiDB:YGR254W"/>
<dbReference type="eggNOG" id="KOG2670">
    <property type="taxonomic scope" value="Eukaryota"/>
</dbReference>
<dbReference type="GeneTree" id="ENSGT00950000182805"/>
<dbReference type="HOGENOM" id="CLU_031223_0_0_1"/>
<dbReference type="InParanoid" id="P00924"/>
<dbReference type="OMA" id="RCMMSHR"/>
<dbReference type="OrthoDB" id="1739814at2759"/>
<dbReference type="BioCyc" id="YEAST:YGR254W-MONOMER"/>
<dbReference type="BRENDA" id="4.2.1.11">
    <property type="organism ID" value="984"/>
</dbReference>
<dbReference type="Reactome" id="R-SCE-70171">
    <property type="pathway name" value="Glycolysis"/>
</dbReference>
<dbReference type="Reactome" id="R-SCE-70263">
    <property type="pathway name" value="Gluconeogenesis"/>
</dbReference>
<dbReference type="SABIO-RK" id="P00924"/>
<dbReference type="UniPathway" id="UPA00109">
    <property type="reaction ID" value="UER00187"/>
</dbReference>
<dbReference type="BioGRID-ORCS" id="853169">
    <property type="hits" value="6 hits in 10 CRISPR screens"/>
</dbReference>
<dbReference type="CD-CODE" id="0F56F502">
    <property type="entry name" value="G-body"/>
</dbReference>
<dbReference type="EvolutionaryTrace" id="P00924"/>
<dbReference type="PRO" id="PR:P00924"/>
<dbReference type="Proteomes" id="UP000002311">
    <property type="component" value="Chromosome VII"/>
</dbReference>
<dbReference type="RNAct" id="P00924">
    <property type="molecule type" value="protein"/>
</dbReference>
<dbReference type="GO" id="GO:0005737">
    <property type="term" value="C:cytoplasm"/>
    <property type="evidence" value="ECO:0007005"/>
    <property type="project" value="SGD"/>
</dbReference>
<dbReference type="GO" id="GO:0005829">
    <property type="term" value="C:cytosol"/>
    <property type="evidence" value="ECO:0007005"/>
    <property type="project" value="SGD"/>
</dbReference>
<dbReference type="GO" id="GO:0000324">
    <property type="term" value="C:fungal-type vacuole"/>
    <property type="evidence" value="ECO:0000314"/>
    <property type="project" value="SGD"/>
</dbReference>
<dbReference type="GO" id="GO:0005739">
    <property type="term" value="C:mitochondrion"/>
    <property type="evidence" value="ECO:0000314"/>
    <property type="project" value="SGD"/>
</dbReference>
<dbReference type="GO" id="GO:0000015">
    <property type="term" value="C:phosphopyruvate hydratase complex"/>
    <property type="evidence" value="ECO:0000314"/>
    <property type="project" value="SGD"/>
</dbReference>
<dbReference type="GO" id="GO:0005886">
    <property type="term" value="C:plasma membrane"/>
    <property type="evidence" value="ECO:0007005"/>
    <property type="project" value="SGD"/>
</dbReference>
<dbReference type="GO" id="GO:0000287">
    <property type="term" value="F:magnesium ion binding"/>
    <property type="evidence" value="ECO:0007669"/>
    <property type="project" value="InterPro"/>
</dbReference>
<dbReference type="GO" id="GO:1904408">
    <property type="term" value="F:melatonin binding"/>
    <property type="evidence" value="ECO:0000314"/>
    <property type="project" value="SGD"/>
</dbReference>
<dbReference type="GO" id="GO:0004634">
    <property type="term" value="F:phosphopyruvate hydratase activity"/>
    <property type="evidence" value="ECO:0000315"/>
    <property type="project" value="SGD"/>
</dbReference>
<dbReference type="GO" id="GO:0006096">
    <property type="term" value="P:glycolytic process"/>
    <property type="evidence" value="ECO:0000315"/>
    <property type="project" value="SGD"/>
</dbReference>
<dbReference type="GO" id="GO:0032889">
    <property type="term" value="P:regulation of vacuole fusion, non-autophagic"/>
    <property type="evidence" value="ECO:0000314"/>
    <property type="project" value="SGD"/>
</dbReference>
<dbReference type="CDD" id="cd03313">
    <property type="entry name" value="enolase"/>
    <property type="match status" value="1"/>
</dbReference>
<dbReference type="FunFam" id="3.30.390.10:FF:000001">
    <property type="entry name" value="Enolase"/>
    <property type="match status" value="1"/>
</dbReference>
<dbReference type="FunFam" id="3.20.20.120:FF:000002">
    <property type="entry name" value="Enolase 1"/>
    <property type="match status" value="1"/>
</dbReference>
<dbReference type="Gene3D" id="3.20.20.120">
    <property type="entry name" value="Enolase-like C-terminal domain"/>
    <property type="match status" value="1"/>
</dbReference>
<dbReference type="Gene3D" id="3.30.390.10">
    <property type="entry name" value="Enolase-like, N-terminal domain"/>
    <property type="match status" value="1"/>
</dbReference>
<dbReference type="HAMAP" id="MF_00318">
    <property type="entry name" value="Enolase"/>
    <property type="match status" value="1"/>
</dbReference>
<dbReference type="InterPro" id="IPR000941">
    <property type="entry name" value="Enolase"/>
</dbReference>
<dbReference type="InterPro" id="IPR036849">
    <property type="entry name" value="Enolase-like_C_sf"/>
</dbReference>
<dbReference type="InterPro" id="IPR029017">
    <property type="entry name" value="Enolase-like_N"/>
</dbReference>
<dbReference type="InterPro" id="IPR020810">
    <property type="entry name" value="Enolase_C"/>
</dbReference>
<dbReference type="InterPro" id="IPR020809">
    <property type="entry name" value="Enolase_CS"/>
</dbReference>
<dbReference type="InterPro" id="IPR020811">
    <property type="entry name" value="Enolase_N"/>
</dbReference>
<dbReference type="NCBIfam" id="TIGR01060">
    <property type="entry name" value="eno"/>
    <property type="match status" value="1"/>
</dbReference>
<dbReference type="PANTHER" id="PTHR11902">
    <property type="entry name" value="ENOLASE"/>
    <property type="match status" value="1"/>
</dbReference>
<dbReference type="PANTHER" id="PTHR11902:SF1">
    <property type="entry name" value="ENOLASE"/>
    <property type="match status" value="1"/>
</dbReference>
<dbReference type="Pfam" id="PF00113">
    <property type="entry name" value="Enolase_C"/>
    <property type="match status" value="1"/>
</dbReference>
<dbReference type="Pfam" id="PF03952">
    <property type="entry name" value="Enolase_N"/>
    <property type="match status" value="1"/>
</dbReference>
<dbReference type="PIRSF" id="PIRSF001400">
    <property type="entry name" value="Enolase"/>
    <property type="match status" value="1"/>
</dbReference>
<dbReference type="PRINTS" id="PR00148">
    <property type="entry name" value="ENOLASE"/>
</dbReference>
<dbReference type="SFLD" id="SFLDS00001">
    <property type="entry name" value="Enolase"/>
    <property type="match status" value="1"/>
</dbReference>
<dbReference type="SFLD" id="SFLDF00002">
    <property type="entry name" value="enolase"/>
    <property type="match status" value="1"/>
</dbReference>
<dbReference type="SMART" id="SM01192">
    <property type="entry name" value="Enolase_C"/>
    <property type="match status" value="1"/>
</dbReference>
<dbReference type="SMART" id="SM01193">
    <property type="entry name" value="Enolase_N"/>
    <property type="match status" value="1"/>
</dbReference>
<dbReference type="SUPFAM" id="SSF51604">
    <property type="entry name" value="Enolase C-terminal domain-like"/>
    <property type="match status" value="1"/>
</dbReference>
<dbReference type="SUPFAM" id="SSF54826">
    <property type="entry name" value="Enolase N-terminal domain-like"/>
    <property type="match status" value="1"/>
</dbReference>
<dbReference type="PROSITE" id="PS00164">
    <property type="entry name" value="ENOLASE"/>
    <property type="match status" value="1"/>
</dbReference>
<reference key="1">
    <citation type="journal article" date="1981" name="J. Biol. Chem.">
        <title>The primary structures of two yeast enolase genes. Homology between the 5' noncoding flanking regions of yeast enolase and glyceraldehyde-3-phosphate dehydrogenase genes.</title>
        <authorList>
            <person name="Holland M.J."/>
            <person name="Holland J.P."/>
            <person name="Thill G.P."/>
            <person name="Jackson K.A."/>
        </authorList>
    </citation>
    <scope>NUCLEOTIDE SEQUENCE [GENOMIC DNA]</scope>
</reference>
<reference key="2">
    <citation type="journal article" date="1997" name="Yeast">
        <title>Sequence analysis of a 10.5 kb DNA fragment from the yeast chromosome VII reveals the presence of three new open reading frames and of a tRNAThr gene.</title>
        <authorList>
            <person name="Mazzoni C."/>
            <person name="Ruzzi M."/>
            <person name="Rinaldi T."/>
            <person name="Solinas F."/>
            <person name="Montebove F."/>
            <person name="Frontali L."/>
        </authorList>
    </citation>
    <scope>NUCLEOTIDE SEQUENCE [GENOMIC DNA]</scope>
    <source>
        <strain>ATCC 204508 / S288c</strain>
    </source>
</reference>
<reference key="3">
    <citation type="journal article" date="1997" name="Nature">
        <title>The nucleotide sequence of Saccharomyces cerevisiae chromosome VII.</title>
        <authorList>
            <person name="Tettelin H."/>
            <person name="Agostoni-Carbone M.L."/>
            <person name="Albermann K."/>
            <person name="Albers M."/>
            <person name="Arroyo J."/>
            <person name="Backes U."/>
            <person name="Barreiros T."/>
            <person name="Bertani I."/>
            <person name="Bjourson A.J."/>
            <person name="Brueckner M."/>
            <person name="Bruschi C.V."/>
            <person name="Carignani G."/>
            <person name="Castagnoli L."/>
            <person name="Cerdan E."/>
            <person name="Clemente M.L."/>
            <person name="Coblenz A."/>
            <person name="Coglievina M."/>
            <person name="Coissac E."/>
            <person name="Defoor E."/>
            <person name="Del Bino S."/>
            <person name="Delius H."/>
            <person name="Delneri D."/>
            <person name="de Wergifosse P."/>
            <person name="Dujon B."/>
            <person name="Durand P."/>
            <person name="Entian K.-D."/>
            <person name="Eraso P."/>
            <person name="Escribano V."/>
            <person name="Fabiani L."/>
            <person name="Fartmann B."/>
            <person name="Feroli F."/>
            <person name="Feuermann M."/>
            <person name="Frontali L."/>
            <person name="Garcia-Gonzalez M."/>
            <person name="Garcia-Saez M.I."/>
            <person name="Goffeau A."/>
            <person name="Guerreiro P."/>
            <person name="Hani J."/>
            <person name="Hansen M."/>
            <person name="Hebling U."/>
            <person name="Hernandez K."/>
            <person name="Heumann K."/>
            <person name="Hilger F."/>
            <person name="Hofmann B."/>
            <person name="Indge K.J."/>
            <person name="James C.M."/>
            <person name="Klima R."/>
            <person name="Koetter P."/>
            <person name="Kramer B."/>
            <person name="Kramer W."/>
            <person name="Lauquin G."/>
            <person name="Leuther H."/>
            <person name="Louis E.J."/>
            <person name="Maillier E."/>
            <person name="Marconi A."/>
            <person name="Martegani E."/>
            <person name="Mazon M.J."/>
            <person name="Mazzoni C."/>
            <person name="McReynolds A.D.K."/>
            <person name="Melchioretto P."/>
            <person name="Mewes H.-W."/>
            <person name="Minenkova O."/>
            <person name="Mueller-Auer S."/>
            <person name="Nawrocki A."/>
            <person name="Netter P."/>
            <person name="Neu R."/>
            <person name="Nombela C."/>
            <person name="Oliver S.G."/>
            <person name="Panzeri L."/>
            <person name="Paoluzi S."/>
            <person name="Plevani P."/>
            <person name="Portetelle D."/>
            <person name="Portillo F."/>
            <person name="Potier S."/>
            <person name="Purnelle B."/>
            <person name="Rieger M."/>
            <person name="Riles L."/>
            <person name="Rinaldi T."/>
            <person name="Robben J."/>
            <person name="Rodrigues-Pousada C."/>
            <person name="Rodriguez-Belmonte E."/>
            <person name="Rodriguez-Torres A.M."/>
            <person name="Rose M."/>
            <person name="Ruzzi M."/>
            <person name="Saliola M."/>
            <person name="Sanchez-Perez M."/>
            <person name="Schaefer B."/>
            <person name="Schaefer M."/>
            <person name="Scharfe M."/>
            <person name="Schmidheini T."/>
            <person name="Schreer A."/>
            <person name="Skala J."/>
            <person name="Souciet J.-L."/>
            <person name="Steensma H.Y."/>
            <person name="Talla E."/>
            <person name="Thierry A."/>
            <person name="Vandenbol M."/>
            <person name="van der Aart Q.J.M."/>
            <person name="Van Dyck L."/>
            <person name="Vanoni M."/>
            <person name="Verhasselt P."/>
            <person name="Voet M."/>
            <person name="Volckaert G."/>
            <person name="Wambutt R."/>
            <person name="Watson M.D."/>
            <person name="Weber N."/>
            <person name="Wedler E."/>
            <person name="Wedler H."/>
            <person name="Wipfli P."/>
            <person name="Wolf K."/>
            <person name="Wright L.F."/>
            <person name="Zaccaria P."/>
            <person name="Zimmermann M."/>
            <person name="Zollner A."/>
            <person name="Kleine K."/>
        </authorList>
    </citation>
    <scope>NUCLEOTIDE SEQUENCE [LARGE SCALE GENOMIC DNA]</scope>
    <source>
        <strain>ATCC 204508 / S288c</strain>
    </source>
</reference>
<reference key="4">
    <citation type="journal article" date="2014" name="G3 (Bethesda)">
        <title>The reference genome sequence of Saccharomyces cerevisiae: Then and now.</title>
        <authorList>
            <person name="Engel S.R."/>
            <person name="Dietrich F.S."/>
            <person name="Fisk D.G."/>
            <person name="Binkley G."/>
            <person name="Balakrishnan R."/>
            <person name="Costanzo M.C."/>
            <person name="Dwight S.S."/>
            <person name="Hitz B.C."/>
            <person name="Karra K."/>
            <person name="Nash R.S."/>
            <person name="Weng S."/>
            <person name="Wong E.D."/>
            <person name="Lloyd P."/>
            <person name="Skrzypek M.S."/>
            <person name="Miyasato S.R."/>
            <person name="Simison M."/>
            <person name="Cherry J.M."/>
        </authorList>
    </citation>
    <scope>GENOME REANNOTATION</scope>
    <source>
        <strain>ATCC 204508 / S288c</strain>
    </source>
</reference>
<reference key="5">
    <citation type="journal article" date="1981" name="J. Biol. Chem.">
        <title>The amino acid sequence of yeast enolase.</title>
        <authorList>
            <person name="Chin C.C.Q."/>
            <person name="Brewer J.M."/>
            <person name="Wold F."/>
        </authorList>
    </citation>
    <scope>PROTEIN SEQUENCE OF 2-437</scope>
</reference>
<reference key="6">
    <citation type="submission" date="1995-08" db="UniProtKB">
        <authorList>
            <person name="Sanchez J.-C."/>
            <person name="Golaz O."/>
            <person name="Schaller D."/>
            <person name="Morch F."/>
            <person name="Frutiger S."/>
            <person name="Hughes G.J."/>
            <person name="Appel R.D."/>
            <person name="Deshusses J."/>
            <person name="Hochstrasser D.F."/>
        </authorList>
    </citation>
    <scope>PROTEIN SEQUENCE OF 2-12</scope>
    <source>
        <strain>ATCC 26786 / X2180-1A</strain>
    </source>
</reference>
<reference key="7">
    <citation type="journal article" date="1994" name="Electrophoresis">
        <title>Protein identifications for a Saccharomyces cerevisiae protein database.</title>
        <authorList>
            <person name="Garrels J.I."/>
            <person name="Futcher B."/>
            <person name="Kobayashi R."/>
            <person name="Latter G.I."/>
            <person name="Schwender B."/>
            <person name="Volpe T."/>
            <person name="Warner J.R."/>
            <person name="McLaughlin C.S."/>
        </authorList>
    </citation>
    <scope>PROTEIN SEQUENCE OF 30-47</scope>
    <source>
        <strain>ATCC 204508 / S288c</strain>
    </source>
</reference>
<reference key="8">
    <citation type="journal article" date="1995" name="Electrophoresis">
        <title>Gene linkage of two-dimensional polyacrylamide gel electrophoresis resolved proteins from isogene families in Saccharomyces cerevisiae by microsequencing of in-gel trypsin generated peptides.</title>
        <authorList>
            <person name="Norbeck J."/>
            <person name="Blomberg A."/>
        </authorList>
    </citation>
    <scope>PROTEIN SEQUENCE OF 69-79</scope>
    <source>
        <strain>ATCC 38531 / Y41</strain>
    </source>
</reference>
<reference key="9">
    <citation type="journal article" date="1996" name="Biochemistry">
        <title>Toward identification of acid/base catalysts in the active site of enolase: comparison of the properties of K345A, E168Q, and E211Q variants.</title>
        <authorList>
            <person name="Poyner R.R."/>
            <person name="Laughlin L.T."/>
            <person name="Sowa G.A."/>
            <person name="Reed G.H."/>
        </authorList>
    </citation>
    <scope>MUTAGENESIS OF LYS-346</scope>
    <scope>ACTIVE SITE</scope>
</reference>
<reference key="10">
    <citation type="journal article" date="2000" name="Biochem. Biophys. Res. Commun.">
        <title>The H159A mutant of yeast enolase 1 has significant activity.</title>
        <authorList>
            <person name="Brewer J.M."/>
            <person name="Holland M.J."/>
            <person name="Lebioda L."/>
        </authorList>
    </citation>
    <scope>MUTAGENESIS OF HIS-160</scope>
</reference>
<reference key="11">
    <citation type="journal article" date="2001" name="Biochemistry">
        <title>Yeast mitochondrial dehydrogenases are associated in a supramolecular complex.</title>
        <authorList>
            <person name="Grandier-Vazeille X."/>
            <person name="Bathany K."/>
            <person name="Chaignepain S."/>
            <person name="Camougrand N."/>
            <person name="Manon S."/>
            <person name="Schmitter J.-M."/>
        </authorList>
    </citation>
    <scope>SUBCELLULAR LOCATION</scope>
</reference>
<reference key="12">
    <citation type="journal article" date="2003" name="J. Protein Chem.">
        <title>Enzymatic function of loop movement in enolase: preparation and some properties of H159N, H159A, H159F, and N207A enolases.</title>
        <authorList>
            <person name="Brewer J.M."/>
            <person name="Glover C.V."/>
            <person name="Holland M.J."/>
            <person name="Lebioda L."/>
        </authorList>
    </citation>
    <scope>MUTAGENESIS OF HIS-160 AND ASN-208</scope>
</reference>
<reference key="13">
    <citation type="journal article" date="2003" name="Nature">
        <title>Global analysis of protein expression in yeast.</title>
        <authorList>
            <person name="Ghaemmaghami S."/>
            <person name="Huh W.-K."/>
            <person name="Bower K."/>
            <person name="Howson R.W."/>
            <person name="Belle A."/>
            <person name="Dephoure N."/>
            <person name="O'Shea E.K."/>
            <person name="Weissman J.S."/>
        </authorList>
    </citation>
    <scope>LEVEL OF PROTEIN EXPRESSION [LARGE SCALE ANALYSIS]</scope>
</reference>
<reference key="14">
    <citation type="journal article" date="2007" name="Proc. Natl. Acad. Sci. U.S.A.">
        <title>Analysis of phosphorylation sites on proteins from Saccharomyces cerevisiae by electron transfer dissociation (ETD) mass spectrometry.</title>
        <authorList>
            <person name="Chi A."/>
            <person name="Huttenhower C."/>
            <person name="Geer L.Y."/>
            <person name="Coon J.J."/>
            <person name="Syka J.E.P."/>
            <person name="Bai D.L."/>
            <person name="Shabanowitz J."/>
            <person name="Burke D.J."/>
            <person name="Troyanskaya O.G."/>
            <person name="Hunt D.F."/>
        </authorList>
    </citation>
    <scope>PHOSPHORYLATION [LARGE SCALE ANALYSIS] AT SER-119</scope>
    <scope>IDENTIFICATION BY MASS SPECTROMETRY [LARGE SCALE ANALYSIS]</scope>
</reference>
<reference key="15">
    <citation type="journal article" date="2012" name="Proteomics">
        <title>Sites of ubiquitin attachment in Saccharomyces cerevisiae.</title>
        <authorList>
            <person name="Starita L.M."/>
            <person name="Lo R.S."/>
            <person name="Eng J.K."/>
            <person name="von Haller P.D."/>
            <person name="Fields S."/>
        </authorList>
    </citation>
    <scope>UBIQUITINATION [LARGE SCALE ANALYSIS] AT LYS-358</scope>
    <scope>IDENTIFICATION BY MASS SPECTROMETRY [LARGE SCALE ANALYSIS]</scope>
</reference>
<reference key="16">
    <citation type="journal article" date="1988" name="Nature">
        <title>Crystal structure of enolase indicates that enolase and pyruvate kinase evolved from a common ancestor.</title>
        <authorList>
            <person name="Lebioda L."/>
            <person name="Stec B."/>
        </authorList>
    </citation>
    <scope>X-RAY CRYSTALLOGRAPHY (2.25 ANGSTROMS)</scope>
</reference>
<reference key="17">
    <citation type="journal article" date="1989" name="J. Biol. Chem.">
        <title>The structure of yeast enolase at 2.25-A resolution. An 8-fold beta + alpha-barrel with a novel beta beta alpha alpha (beta alpha)6 topology.</title>
        <authorList>
            <person name="Lebioda L."/>
            <person name="Stec B."/>
            <person name="Brewer J.M."/>
        </authorList>
    </citation>
    <scope>X-RAY CRYSTALLOGRAPHY (2.25 ANGSTROMS)</scope>
</reference>
<reference key="18">
    <citation type="journal article" date="1990" name="J. Mol. Biol.">
        <title>Refined structure of yeast apo-enolase at 2.25-A resolution.</title>
        <authorList>
            <person name="Stec B."/>
            <person name="Lebioda L."/>
        </authorList>
    </citation>
    <scope>X-RAY CRYSTALLOGRAPHY (2.25 ANGSTROMS)</scope>
</reference>
<reference key="19">
    <citation type="journal article" date="1996" name="Biochemistry">
        <title>A carboxylate oxygen of the substrate bridges the magnesium ions at the active site of enolase: structure of the yeast enzyme complexed with the equilibrium mixture of 2-phosphoglycerate and phosphoenolpyruvate at 1.8-A resolution.</title>
        <authorList>
            <person name="Larsen T.M."/>
            <person name="Wedekind J.E."/>
            <person name="Rayment I."/>
            <person name="Reed G.H."/>
        </authorList>
    </citation>
    <scope>X-RAY CRYSTALLOGRAPHY (1.8 ANGSTROMS) IN COMPLEX WITH SUBSTRATE AND MAGNESIUM IONS</scope>
    <scope>COFACTOR</scope>
</reference>
<reference key="20">
    <citation type="journal article" date="1997" name="Biochemistry">
        <title>Mechanism of enolase: the crystal structure of asymmetric dimer enolase-2-phospho-D-glycerate/enolase-phosphoenolpyruvate at 2.0-A resolution.</title>
        <authorList>
            <person name="Zhang E."/>
            <person name="Brewer J.M."/>
            <person name="Minor W."/>
            <person name="Carreira L.A."/>
            <person name="Lebioda L."/>
        </authorList>
    </citation>
    <scope>X-RAY CRYSTALLOGRAPHY (2.0 ANGSTROMS) IN COMPLEX WITH SUBSTRATE</scope>
</reference>
<reference key="21">
    <citation type="journal article" date="2002" name="Arch. Biochem. Biophys.">
        <title>Functional and structural changes due to a serine to alanine mutation in the active-site flap of enolase.</title>
        <authorList>
            <person name="Poyner R.R."/>
            <person name="Larsen T.M."/>
            <person name="Wong S.-W."/>
            <person name="Reed G.H."/>
        </authorList>
    </citation>
    <scope>X-RAY CRYSTALLOGRAPHY (2.1 ANGSTROMS) OF MUTANT ALA-40 IN COMPLEX WITH MAGNESIUM IONS AND SUBSTRATE ANALOG</scope>
</reference>
<reference key="22">
    <citation type="journal article" date="2003" name="Biochemistry">
        <title>Reverse protonation is the key to general acid-base catalysis in enolase.</title>
        <authorList>
            <person name="Sims P.A."/>
            <person name="Larsen T.M."/>
            <person name="Poyner R.R."/>
            <person name="Cleland W.W."/>
            <person name="Reed G.H."/>
        </authorList>
    </citation>
    <scope>X-RAY CRYSTALLOGRAPHY (1.8 ANGSTROMS) OF MUTANT GLN-212 AND MUTANT GLN-169</scope>
    <scope>MUTAGENESIS OF GLU-212 AND LYS-346</scope>
    <scope>ACTIVE SITE</scope>
</reference>
<keyword id="KW-0002">3D-structure</keyword>
<keyword id="KW-0963">Cytoplasm</keyword>
<keyword id="KW-0903">Direct protein sequencing</keyword>
<keyword id="KW-0324">Glycolysis</keyword>
<keyword id="KW-1017">Isopeptide bond</keyword>
<keyword id="KW-0456">Lyase</keyword>
<keyword id="KW-0460">Magnesium</keyword>
<keyword id="KW-0479">Metal-binding</keyword>
<keyword id="KW-0597">Phosphoprotein</keyword>
<keyword id="KW-1185">Reference proteome</keyword>
<keyword id="KW-0832">Ubl conjugation</keyword>
<comment type="catalytic activity">
    <reaction>
        <text>(2R)-2-phosphoglycerate = phosphoenolpyruvate + H2O</text>
        <dbReference type="Rhea" id="RHEA:10164"/>
        <dbReference type="ChEBI" id="CHEBI:15377"/>
        <dbReference type="ChEBI" id="CHEBI:58289"/>
        <dbReference type="ChEBI" id="CHEBI:58702"/>
        <dbReference type="EC" id="4.2.1.11"/>
    </reaction>
</comment>
<comment type="cofactor">
    <cofactor evidence="9">
        <name>Mg(2+)</name>
        <dbReference type="ChEBI" id="CHEBI:18420"/>
    </cofactor>
    <text evidence="9">Mg(2+) is required for catalysis and for stabilizing the dimer.</text>
</comment>
<comment type="pathway">
    <text>Carbohydrate degradation; glycolysis; pyruvate from D-glyceraldehyde 3-phosphate: step 4/5.</text>
</comment>
<comment type="subunit">
    <text evidence="4 9 11">Homodimer.</text>
</comment>
<comment type="subcellular location">
    <subcellularLocation>
        <location evidence="3">Cytoplasm</location>
    </subcellularLocation>
</comment>
<comment type="miscellaneous">
    <text evidence="7">Present with 76700 molecules/cell in log phase SD medium.</text>
</comment>
<comment type="similarity">
    <text evidence="13">Belongs to the enolase family.</text>
</comment>
<organism>
    <name type="scientific">Saccharomyces cerevisiae (strain ATCC 204508 / S288c)</name>
    <name type="common">Baker's yeast</name>
    <dbReference type="NCBI Taxonomy" id="559292"/>
    <lineage>
        <taxon>Eukaryota</taxon>
        <taxon>Fungi</taxon>
        <taxon>Dikarya</taxon>
        <taxon>Ascomycota</taxon>
        <taxon>Saccharomycotina</taxon>
        <taxon>Saccharomycetes</taxon>
        <taxon>Saccharomycetales</taxon>
        <taxon>Saccharomycetaceae</taxon>
        <taxon>Saccharomyces</taxon>
    </lineage>
</organism>
<proteinExistence type="evidence at protein level"/>